<protein>
    <recommendedName>
        <fullName>Uncharacterized RNA pseudouridine synthase ML1370</fullName>
        <ecNumber>5.4.99.-</ecNumber>
    </recommendedName>
    <alternativeName>
        <fullName>RNA pseudouridylate synthase</fullName>
    </alternativeName>
    <alternativeName>
        <fullName>RNA-uridine isomerase</fullName>
    </alternativeName>
</protein>
<reference key="1">
    <citation type="journal article" date="2001" name="Nature">
        <title>Massive gene decay in the leprosy bacillus.</title>
        <authorList>
            <person name="Cole S.T."/>
            <person name="Eiglmeier K."/>
            <person name="Parkhill J."/>
            <person name="James K.D."/>
            <person name="Thomson N.R."/>
            <person name="Wheeler P.R."/>
            <person name="Honore N."/>
            <person name="Garnier T."/>
            <person name="Churcher C.M."/>
            <person name="Harris D.E."/>
            <person name="Mungall K.L."/>
            <person name="Basham D."/>
            <person name="Brown D."/>
            <person name="Chillingworth T."/>
            <person name="Connor R."/>
            <person name="Davies R.M."/>
            <person name="Devlin K."/>
            <person name="Duthoy S."/>
            <person name="Feltwell T."/>
            <person name="Fraser A."/>
            <person name="Hamlin N."/>
            <person name="Holroyd S."/>
            <person name="Hornsby T."/>
            <person name="Jagels K."/>
            <person name="Lacroix C."/>
            <person name="Maclean J."/>
            <person name="Moule S."/>
            <person name="Murphy L.D."/>
            <person name="Oliver K."/>
            <person name="Quail M.A."/>
            <person name="Rajandream M.A."/>
            <person name="Rutherford K.M."/>
            <person name="Rutter S."/>
            <person name="Seeger K."/>
            <person name="Simon S."/>
            <person name="Simmonds M."/>
            <person name="Skelton J."/>
            <person name="Squares R."/>
            <person name="Squares S."/>
            <person name="Stevens K."/>
            <person name="Taylor K."/>
            <person name="Whitehead S."/>
            <person name="Woodward J.R."/>
            <person name="Barrell B.G."/>
        </authorList>
    </citation>
    <scope>NUCLEOTIDE SEQUENCE [LARGE SCALE GENOMIC DNA]</scope>
    <source>
        <strain>TN</strain>
    </source>
</reference>
<reference key="2">
    <citation type="submission" date="1994-09" db="EMBL/GenBank/DDBJ databases">
        <authorList>
            <person name="Smith D.R."/>
            <person name="Robison K."/>
        </authorList>
    </citation>
    <scope>NUCLEOTIDE SEQUENCE [GENOMIC DNA] OF 71-256</scope>
</reference>
<sequence>MVEIHDSRMDRGAGAVRLQKILSRAGIASRRAAEKLIIEGRVEVDGQLVRELGTRVDPDVSVVRVDGVKVVVDDSLVYLALNKPRGMYSTMSDDRGRPCVGDLIERRVRGNKKLFHVGRLDADTEGLILLTNDGELAHRLMHPSHEVSKTYLATVKGAVPRGLGKKLSVGLELDDGPAHVDDFAVVDAIPGKTLVRLTLHEGRKRIVRRLLTAAGFPVEMLVRTDIGAVSLGDQRPGCLRALLRDEIRQLYKEVGL</sequence>
<feature type="chain" id="PRO_0000100028" description="Uncharacterized RNA pseudouridine synthase ML1370">
    <location>
        <begin position="1"/>
        <end position="256"/>
    </location>
</feature>
<feature type="domain" description="S4 RNA-binding" evidence="2">
    <location>
        <begin position="16"/>
        <end position="83"/>
    </location>
</feature>
<feature type="active site" description="Nucleophile" evidence="1">
    <location>
        <position position="121"/>
    </location>
</feature>
<name>Y1370_MYCLE</name>
<keyword id="KW-0413">Isomerase</keyword>
<keyword id="KW-1185">Reference proteome</keyword>
<keyword id="KW-0694">RNA-binding</keyword>
<proteinExistence type="inferred from homology"/>
<gene>
    <name type="ordered locus">ML1370</name>
    <name type="ORF">MLCB1351.03c</name>
    <name type="ORF">u0247g</name>
</gene>
<accession>O05668</accession>
<accession>Q49886</accession>
<organism>
    <name type="scientific">Mycobacterium leprae (strain TN)</name>
    <dbReference type="NCBI Taxonomy" id="272631"/>
    <lineage>
        <taxon>Bacteria</taxon>
        <taxon>Bacillati</taxon>
        <taxon>Actinomycetota</taxon>
        <taxon>Actinomycetes</taxon>
        <taxon>Mycobacteriales</taxon>
        <taxon>Mycobacteriaceae</taxon>
        <taxon>Mycobacterium</taxon>
    </lineage>
</organism>
<dbReference type="EC" id="5.4.99.-"/>
<dbReference type="EMBL" id="Z95117">
    <property type="protein sequence ID" value="CAB08276.1"/>
    <property type="molecule type" value="Genomic_DNA"/>
</dbReference>
<dbReference type="EMBL" id="AL583921">
    <property type="protein sequence ID" value="CAC31751.1"/>
    <property type="status" value="ALT_INIT"/>
    <property type="molecule type" value="Genomic_DNA"/>
</dbReference>
<dbReference type="EMBL" id="U00021">
    <property type="protein sequence ID" value="AAA50926.1"/>
    <property type="molecule type" value="Genomic_DNA"/>
</dbReference>
<dbReference type="PIR" id="D87080">
    <property type="entry name" value="D87080"/>
</dbReference>
<dbReference type="PIR" id="S72955">
    <property type="entry name" value="S72955"/>
</dbReference>
<dbReference type="RefSeq" id="WP_010908299.1">
    <property type="nucleotide sequence ID" value="NC_002677.1"/>
</dbReference>
<dbReference type="SMR" id="O05668"/>
<dbReference type="STRING" id="272631.gene:17575208"/>
<dbReference type="KEGG" id="mle:ML1370"/>
<dbReference type="Leproma" id="ML1370"/>
<dbReference type="eggNOG" id="COG1187">
    <property type="taxonomic scope" value="Bacteria"/>
</dbReference>
<dbReference type="HOGENOM" id="CLU_024979_1_2_11"/>
<dbReference type="Proteomes" id="UP000000806">
    <property type="component" value="Chromosome"/>
</dbReference>
<dbReference type="GO" id="GO:0003723">
    <property type="term" value="F:RNA binding"/>
    <property type="evidence" value="ECO:0007669"/>
    <property type="project" value="UniProtKB-KW"/>
</dbReference>
<dbReference type="GO" id="GO:0120159">
    <property type="term" value="F:rRNA pseudouridine synthase activity"/>
    <property type="evidence" value="ECO:0007669"/>
    <property type="project" value="UniProtKB-ARBA"/>
</dbReference>
<dbReference type="GO" id="GO:0000455">
    <property type="term" value="P:enzyme-directed rRNA pseudouridine synthesis"/>
    <property type="evidence" value="ECO:0007669"/>
    <property type="project" value="UniProtKB-ARBA"/>
</dbReference>
<dbReference type="CDD" id="cd02870">
    <property type="entry name" value="PseudoU_synth_RsuA_like"/>
    <property type="match status" value="1"/>
</dbReference>
<dbReference type="CDD" id="cd00165">
    <property type="entry name" value="S4"/>
    <property type="match status" value="1"/>
</dbReference>
<dbReference type="FunFam" id="3.10.290.10:FF:000003">
    <property type="entry name" value="Pseudouridine synthase"/>
    <property type="match status" value="1"/>
</dbReference>
<dbReference type="Gene3D" id="3.30.2350.10">
    <property type="entry name" value="Pseudouridine synthase"/>
    <property type="match status" value="1"/>
</dbReference>
<dbReference type="Gene3D" id="3.10.290.10">
    <property type="entry name" value="RNA-binding S4 domain"/>
    <property type="match status" value="1"/>
</dbReference>
<dbReference type="InterPro" id="IPR020103">
    <property type="entry name" value="PsdUridine_synth_cat_dom_sf"/>
</dbReference>
<dbReference type="InterPro" id="IPR006145">
    <property type="entry name" value="PsdUridine_synth_RsuA/RluA"/>
</dbReference>
<dbReference type="InterPro" id="IPR000748">
    <property type="entry name" value="PsdUridine_synth_RsuA/RluB/E/F"/>
</dbReference>
<dbReference type="InterPro" id="IPR018496">
    <property type="entry name" value="PsdUridine_synth_RsuA/RluB_CS"/>
</dbReference>
<dbReference type="InterPro" id="IPR050343">
    <property type="entry name" value="RsuA_PseudoU_synthase"/>
</dbReference>
<dbReference type="InterPro" id="IPR002942">
    <property type="entry name" value="S4_RNA-bd"/>
</dbReference>
<dbReference type="InterPro" id="IPR036986">
    <property type="entry name" value="S4_RNA-bd_sf"/>
</dbReference>
<dbReference type="NCBIfam" id="TIGR00093">
    <property type="entry name" value="pseudouridine synthase"/>
    <property type="match status" value="1"/>
</dbReference>
<dbReference type="PANTHER" id="PTHR47683">
    <property type="entry name" value="PSEUDOURIDINE SYNTHASE FAMILY PROTEIN-RELATED"/>
    <property type="match status" value="1"/>
</dbReference>
<dbReference type="PANTHER" id="PTHR47683:SF2">
    <property type="entry name" value="RNA-BINDING S4 DOMAIN-CONTAINING PROTEIN"/>
    <property type="match status" value="1"/>
</dbReference>
<dbReference type="Pfam" id="PF00849">
    <property type="entry name" value="PseudoU_synth_2"/>
    <property type="match status" value="1"/>
</dbReference>
<dbReference type="Pfam" id="PF01479">
    <property type="entry name" value="S4"/>
    <property type="match status" value="1"/>
</dbReference>
<dbReference type="SMART" id="SM00363">
    <property type="entry name" value="S4"/>
    <property type="match status" value="1"/>
</dbReference>
<dbReference type="SUPFAM" id="SSF55174">
    <property type="entry name" value="Alpha-L RNA-binding motif"/>
    <property type="match status" value="1"/>
</dbReference>
<dbReference type="SUPFAM" id="SSF55120">
    <property type="entry name" value="Pseudouridine synthase"/>
    <property type="match status" value="1"/>
</dbReference>
<dbReference type="PROSITE" id="PS01149">
    <property type="entry name" value="PSI_RSU"/>
    <property type="match status" value="1"/>
</dbReference>
<dbReference type="PROSITE" id="PS50889">
    <property type="entry name" value="S4"/>
    <property type="match status" value="1"/>
</dbReference>
<evidence type="ECO:0000250" key="1"/>
<evidence type="ECO:0000255" key="2">
    <source>
        <dbReference type="PROSITE-ProRule" id="PRU00182"/>
    </source>
</evidence>
<evidence type="ECO:0000305" key="3"/>
<comment type="catalytic activity">
    <reaction>
        <text>a uridine in RNA = a pseudouridine in RNA</text>
        <dbReference type="Rhea" id="RHEA:48348"/>
        <dbReference type="Rhea" id="RHEA-COMP:12068"/>
        <dbReference type="Rhea" id="RHEA-COMP:12069"/>
        <dbReference type="ChEBI" id="CHEBI:65314"/>
        <dbReference type="ChEBI" id="CHEBI:65315"/>
    </reaction>
</comment>
<comment type="similarity">
    <text evidence="3">Belongs to the pseudouridine synthase RsuA family.</text>
</comment>
<comment type="sequence caution" evidence="3">
    <conflict type="erroneous initiation">
        <sequence resource="EMBL-CDS" id="CAC31751"/>
    </conflict>
</comment>